<reference key="1">
    <citation type="submission" date="2007-10" db="EMBL/GenBank/DDBJ databases">
        <title>Complete sequence of chromosome of Desulforudis audaxviator MP104C.</title>
        <authorList>
            <person name="Copeland A."/>
            <person name="Lucas S."/>
            <person name="Lapidus A."/>
            <person name="Barry K."/>
            <person name="Glavina del Rio T."/>
            <person name="Dalin E."/>
            <person name="Tice H."/>
            <person name="Bruce D."/>
            <person name="Pitluck S."/>
            <person name="Lowry S.R."/>
            <person name="Larimer F."/>
            <person name="Land M.L."/>
            <person name="Hauser L."/>
            <person name="Kyrpides N."/>
            <person name="Ivanova N.N."/>
            <person name="Richardson P."/>
        </authorList>
    </citation>
    <scope>NUCLEOTIDE SEQUENCE [LARGE SCALE GENOMIC DNA]</scope>
    <source>
        <strain>MP104C</strain>
    </source>
</reference>
<organism>
    <name type="scientific">Desulforudis audaxviator (strain MP104C)</name>
    <dbReference type="NCBI Taxonomy" id="477974"/>
    <lineage>
        <taxon>Bacteria</taxon>
        <taxon>Bacillati</taxon>
        <taxon>Bacillota</taxon>
        <taxon>Clostridia</taxon>
        <taxon>Thermoanaerobacterales</taxon>
        <taxon>Candidatus Desulforudaceae</taxon>
        <taxon>Candidatus Desulforudis</taxon>
    </lineage>
</organism>
<comment type="function">
    <text evidence="1">Negative regulator of class I heat shock genes (grpE-dnaK-dnaJ and groELS operons). Prevents heat-shock induction of these operons.</text>
</comment>
<comment type="similarity">
    <text evidence="1">Belongs to the HrcA family.</text>
</comment>
<protein>
    <recommendedName>
        <fullName evidence="1">Heat-inducible transcription repressor HrcA</fullName>
    </recommendedName>
</protein>
<sequence length="344" mass="38368">MGIDERKKQILRAIVLDYIATAEPVGSRTIARKYGLGISPATIRNEMADLEEMGYLEQPHTSAGRIPSQRGYRYYVDELMEPETPAEEEKLIIKTNYQAKVKSISEVIERTGQLMSQLTSYAALVSTPRVTGSTVQHVQLIAMGGGKAMVLVVTEPEKVHTRVIDLPENITAEDLETVSRVMNAKIRGHSLNDIRITILREIYLELLRHKAVVEYIMDLIEDSGESTEDRVYLGGILNILNQPEFRNVEKMKTLLSLLDQEALLSSLLAEQAGQEEGITVLIGDEFKCDLIQGCSLVSARYGVEGRAVGALAVLGPSRMDYARVTGLVEYLTRNLSRVLEKLYR</sequence>
<gene>
    <name evidence="1" type="primary">hrcA</name>
    <name type="ordered locus">Daud_2060</name>
</gene>
<dbReference type="EMBL" id="CP000860">
    <property type="protein sequence ID" value="ACA60550.1"/>
    <property type="molecule type" value="Genomic_DNA"/>
</dbReference>
<dbReference type="RefSeq" id="WP_012303125.1">
    <property type="nucleotide sequence ID" value="NC_010424.1"/>
</dbReference>
<dbReference type="SMR" id="B1I6D9"/>
<dbReference type="STRING" id="477974.Daud_2060"/>
<dbReference type="KEGG" id="dau:Daud_2060"/>
<dbReference type="eggNOG" id="COG1420">
    <property type="taxonomic scope" value="Bacteria"/>
</dbReference>
<dbReference type="HOGENOM" id="CLU_050019_1_0_9"/>
<dbReference type="OrthoDB" id="9783139at2"/>
<dbReference type="Proteomes" id="UP000008544">
    <property type="component" value="Chromosome"/>
</dbReference>
<dbReference type="GO" id="GO:0003677">
    <property type="term" value="F:DNA binding"/>
    <property type="evidence" value="ECO:0007669"/>
    <property type="project" value="InterPro"/>
</dbReference>
<dbReference type="GO" id="GO:0045892">
    <property type="term" value="P:negative regulation of DNA-templated transcription"/>
    <property type="evidence" value="ECO:0007669"/>
    <property type="project" value="UniProtKB-UniRule"/>
</dbReference>
<dbReference type="FunFam" id="1.10.10.10:FF:000049">
    <property type="entry name" value="Heat-inducible transcription repressor HrcA"/>
    <property type="match status" value="1"/>
</dbReference>
<dbReference type="Gene3D" id="3.30.450.40">
    <property type="match status" value="1"/>
</dbReference>
<dbReference type="Gene3D" id="3.30.390.60">
    <property type="entry name" value="Heat-inducible transcription repressor hrca homolog, domain 3"/>
    <property type="match status" value="1"/>
</dbReference>
<dbReference type="Gene3D" id="1.10.10.10">
    <property type="entry name" value="Winged helix-like DNA-binding domain superfamily/Winged helix DNA-binding domain"/>
    <property type="match status" value="1"/>
</dbReference>
<dbReference type="HAMAP" id="MF_00081">
    <property type="entry name" value="HrcA"/>
    <property type="match status" value="1"/>
</dbReference>
<dbReference type="InterPro" id="IPR029016">
    <property type="entry name" value="GAF-like_dom_sf"/>
</dbReference>
<dbReference type="InterPro" id="IPR002571">
    <property type="entry name" value="HrcA"/>
</dbReference>
<dbReference type="InterPro" id="IPR021153">
    <property type="entry name" value="HrcA_C"/>
</dbReference>
<dbReference type="InterPro" id="IPR036388">
    <property type="entry name" value="WH-like_DNA-bd_sf"/>
</dbReference>
<dbReference type="InterPro" id="IPR036390">
    <property type="entry name" value="WH_DNA-bd_sf"/>
</dbReference>
<dbReference type="InterPro" id="IPR023120">
    <property type="entry name" value="WHTH_transcript_rep_HrcA_IDD"/>
</dbReference>
<dbReference type="NCBIfam" id="TIGR00331">
    <property type="entry name" value="hrcA"/>
    <property type="match status" value="1"/>
</dbReference>
<dbReference type="PANTHER" id="PTHR34824">
    <property type="entry name" value="HEAT-INDUCIBLE TRANSCRIPTION REPRESSOR HRCA"/>
    <property type="match status" value="1"/>
</dbReference>
<dbReference type="PANTHER" id="PTHR34824:SF1">
    <property type="entry name" value="HEAT-INDUCIBLE TRANSCRIPTION REPRESSOR HRCA"/>
    <property type="match status" value="1"/>
</dbReference>
<dbReference type="Pfam" id="PF01628">
    <property type="entry name" value="HrcA"/>
    <property type="match status" value="1"/>
</dbReference>
<dbReference type="PIRSF" id="PIRSF005485">
    <property type="entry name" value="HrcA"/>
    <property type="match status" value="1"/>
</dbReference>
<dbReference type="SUPFAM" id="SSF55781">
    <property type="entry name" value="GAF domain-like"/>
    <property type="match status" value="1"/>
</dbReference>
<dbReference type="SUPFAM" id="SSF46785">
    <property type="entry name" value="Winged helix' DNA-binding domain"/>
    <property type="match status" value="1"/>
</dbReference>
<accession>B1I6D9</accession>
<evidence type="ECO:0000255" key="1">
    <source>
        <dbReference type="HAMAP-Rule" id="MF_00081"/>
    </source>
</evidence>
<proteinExistence type="inferred from homology"/>
<feature type="chain" id="PRO_1000092808" description="Heat-inducible transcription repressor HrcA">
    <location>
        <begin position="1"/>
        <end position="344"/>
    </location>
</feature>
<name>HRCA_DESAP</name>
<keyword id="KW-1185">Reference proteome</keyword>
<keyword id="KW-0678">Repressor</keyword>
<keyword id="KW-0346">Stress response</keyword>
<keyword id="KW-0804">Transcription</keyword>
<keyword id="KW-0805">Transcription regulation</keyword>